<keyword id="KW-0963">Cytoplasm</keyword>
<keyword id="KW-0396">Initiation factor</keyword>
<keyword id="KW-0648">Protein biosynthesis</keyword>
<keyword id="KW-1185">Reference proteome</keyword>
<keyword id="KW-0694">RNA-binding</keyword>
<keyword id="KW-0699">rRNA-binding</keyword>
<evidence type="ECO:0000255" key="1">
    <source>
        <dbReference type="HAMAP-Rule" id="MF_00075"/>
    </source>
</evidence>
<accession>A5G3G6</accession>
<gene>
    <name evidence="1" type="primary">infA</name>
    <name type="ordered locus">Gura_2146</name>
</gene>
<sequence length="72" mass="8230">MSKEEAIEVEGTVIEPLPNAMFKVKLENDHIVLAHISGKMRKYFIKILPGDKVTVELSPYDLTRGRITYRAK</sequence>
<organism>
    <name type="scientific">Geotalea uraniireducens (strain Rf4)</name>
    <name type="common">Geobacter uraniireducens</name>
    <dbReference type="NCBI Taxonomy" id="351605"/>
    <lineage>
        <taxon>Bacteria</taxon>
        <taxon>Pseudomonadati</taxon>
        <taxon>Thermodesulfobacteriota</taxon>
        <taxon>Desulfuromonadia</taxon>
        <taxon>Geobacterales</taxon>
        <taxon>Geobacteraceae</taxon>
        <taxon>Geotalea</taxon>
    </lineage>
</organism>
<feature type="chain" id="PRO_0000338832" description="Translation initiation factor IF-1">
    <location>
        <begin position="1"/>
        <end position="72"/>
    </location>
</feature>
<feature type="domain" description="S1-like" evidence="1">
    <location>
        <begin position="1"/>
        <end position="72"/>
    </location>
</feature>
<comment type="function">
    <text evidence="1">One of the essential components for the initiation of protein synthesis. Stabilizes the binding of IF-2 and IF-3 on the 30S subunit to which N-formylmethionyl-tRNA(fMet) subsequently binds. Helps modulate mRNA selection, yielding the 30S pre-initiation complex (PIC). Upon addition of the 50S ribosomal subunit IF-1, IF-2 and IF-3 are released leaving the mature 70S translation initiation complex.</text>
</comment>
<comment type="subunit">
    <text evidence="1">Component of the 30S ribosomal translation pre-initiation complex which assembles on the 30S ribosome in the order IF-2 and IF-3, IF-1 and N-formylmethionyl-tRNA(fMet); mRNA recruitment can occur at any time during PIC assembly.</text>
</comment>
<comment type="subcellular location">
    <subcellularLocation>
        <location evidence="1">Cytoplasm</location>
    </subcellularLocation>
</comment>
<comment type="similarity">
    <text evidence="1">Belongs to the IF-1 family.</text>
</comment>
<proteinExistence type="inferred from homology"/>
<protein>
    <recommendedName>
        <fullName evidence="1">Translation initiation factor IF-1</fullName>
    </recommendedName>
</protein>
<dbReference type="EMBL" id="CP000698">
    <property type="protein sequence ID" value="ABQ26334.1"/>
    <property type="molecule type" value="Genomic_DNA"/>
</dbReference>
<dbReference type="RefSeq" id="WP_011939035.1">
    <property type="nucleotide sequence ID" value="NC_009483.1"/>
</dbReference>
<dbReference type="SMR" id="A5G3G6"/>
<dbReference type="STRING" id="351605.Gura_2146"/>
<dbReference type="KEGG" id="gur:Gura_2146"/>
<dbReference type="HOGENOM" id="CLU_151267_1_0_7"/>
<dbReference type="OrthoDB" id="9803250at2"/>
<dbReference type="Proteomes" id="UP000006695">
    <property type="component" value="Chromosome"/>
</dbReference>
<dbReference type="GO" id="GO:0005829">
    <property type="term" value="C:cytosol"/>
    <property type="evidence" value="ECO:0007669"/>
    <property type="project" value="TreeGrafter"/>
</dbReference>
<dbReference type="GO" id="GO:0043022">
    <property type="term" value="F:ribosome binding"/>
    <property type="evidence" value="ECO:0007669"/>
    <property type="project" value="UniProtKB-UniRule"/>
</dbReference>
<dbReference type="GO" id="GO:0019843">
    <property type="term" value="F:rRNA binding"/>
    <property type="evidence" value="ECO:0007669"/>
    <property type="project" value="UniProtKB-UniRule"/>
</dbReference>
<dbReference type="GO" id="GO:0003743">
    <property type="term" value="F:translation initiation factor activity"/>
    <property type="evidence" value="ECO:0007669"/>
    <property type="project" value="UniProtKB-UniRule"/>
</dbReference>
<dbReference type="CDD" id="cd04451">
    <property type="entry name" value="S1_IF1"/>
    <property type="match status" value="1"/>
</dbReference>
<dbReference type="FunFam" id="2.40.50.140:FF:000002">
    <property type="entry name" value="Translation initiation factor IF-1"/>
    <property type="match status" value="1"/>
</dbReference>
<dbReference type="Gene3D" id="2.40.50.140">
    <property type="entry name" value="Nucleic acid-binding proteins"/>
    <property type="match status" value="1"/>
</dbReference>
<dbReference type="HAMAP" id="MF_00075">
    <property type="entry name" value="IF_1"/>
    <property type="match status" value="1"/>
</dbReference>
<dbReference type="InterPro" id="IPR012340">
    <property type="entry name" value="NA-bd_OB-fold"/>
</dbReference>
<dbReference type="InterPro" id="IPR006196">
    <property type="entry name" value="RNA-binding_domain_S1_IF1"/>
</dbReference>
<dbReference type="InterPro" id="IPR003029">
    <property type="entry name" value="S1_domain"/>
</dbReference>
<dbReference type="InterPro" id="IPR004368">
    <property type="entry name" value="TIF_IF1"/>
</dbReference>
<dbReference type="NCBIfam" id="TIGR00008">
    <property type="entry name" value="infA"/>
    <property type="match status" value="1"/>
</dbReference>
<dbReference type="PANTHER" id="PTHR33370">
    <property type="entry name" value="TRANSLATION INITIATION FACTOR IF-1, CHLOROPLASTIC"/>
    <property type="match status" value="1"/>
</dbReference>
<dbReference type="PANTHER" id="PTHR33370:SF1">
    <property type="entry name" value="TRANSLATION INITIATION FACTOR IF-1, CHLOROPLASTIC"/>
    <property type="match status" value="1"/>
</dbReference>
<dbReference type="Pfam" id="PF01176">
    <property type="entry name" value="eIF-1a"/>
    <property type="match status" value="1"/>
</dbReference>
<dbReference type="SMART" id="SM00316">
    <property type="entry name" value="S1"/>
    <property type="match status" value="1"/>
</dbReference>
<dbReference type="SUPFAM" id="SSF50249">
    <property type="entry name" value="Nucleic acid-binding proteins"/>
    <property type="match status" value="1"/>
</dbReference>
<dbReference type="PROSITE" id="PS50832">
    <property type="entry name" value="S1_IF1_TYPE"/>
    <property type="match status" value="1"/>
</dbReference>
<reference key="1">
    <citation type="submission" date="2007-05" db="EMBL/GenBank/DDBJ databases">
        <title>Complete sequence of Geobacter uraniireducens Rf4.</title>
        <authorList>
            <consortium name="US DOE Joint Genome Institute"/>
            <person name="Copeland A."/>
            <person name="Lucas S."/>
            <person name="Lapidus A."/>
            <person name="Barry K."/>
            <person name="Detter J.C."/>
            <person name="Glavina del Rio T."/>
            <person name="Hammon N."/>
            <person name="Israni S."/>
            <person name="Dalin E."/>
            <person name="Tice H."/>
            <person name="Pitluck S."/>
            <person name="Chertkov O."/>
            <person name="Brettin T."/>
            <person name="Bruce D."/>
            <person name="Han C."/>
            <person name="Schmutz J."/>
            <person name="Larimer F."/>
            <person name="Land M."/>
            <person name="Hauser L."/>
            <person name="Kyrpides N."/>
            <person name="Mikhailova N."/>
            <person name="Shelobolina E."/>
            <person name="Aklujkar M."/>
            <person name="Lovley D."/>
            <person name="Richardson P."/>
        </authorList>
    </citation>
    <scope>NUCLEOTIDE SEQUENCE [LARGE SCALE GENOMIC DNA]</scope>
    <source>
        <strain>ATCC BAA-1134 / JCM 13001 / Rf4</strain>
    </source>
</reference>
<name>IF1_GEOUR</name>